<evidence type="ECO:0000255" key="1">
    <source>
        <dbReference type="HAMAP-Rule" id="MF_01351"/>
    </source>
</evidence>
<comment type="function">
    <text evidence="1">NDH shuttles electrons from NAD(P)H:plastoquinone, via FMN and iron-sulfur (Fe-S) centers, to quinones in the photosynthetic chain and possibly in a chloroplast respiratory chain. The immediate electron acceptor for the enzyme in this species is believed to be plastoquinone. Couples the redox reaction to proton translocation, and thus conserves the redox energy in a proton gradient.</text>
</comment>
<comment type="catalytic activity">
    <reaction evidence="1">
        <text>a plastoquinone + NADH + (n+1) H(+)(in) = a plastoquinol + NAD(+) + n H(+)(out)</text>
        <dbReference type="Rhea" id="RHEA:42608"/>
        <dbReference type="Rhea" id="RHEA-COMP:9561"/>
        <dbReference type="Rhea" id="RHEA-COMP:9562"/>
        <dbReference type="ChEBI" id="CHEBI:15378"/>
        <dbReference type="ChEBI" id="CHEBI:17757"/>
        <dbReference type="ChEBI" id="CHEBI:57540"/>
        <dbReference type="ChEBI" id="CHEBI:57945"/>
        <dbReference type="ChEBI" id="CHEBI:62192"/>
    </reaction>
</comment>
<comment type="catalytic activity">
    <reaction evidence="1">
        <text>a plastoquinone + NADPH + (n+1) H(+)(in) = a plastoquinol + NADP(+) + n H(+)(out)</text>
        <dbReference type="Rhea" id="RHEA:42612"/>
        <dbReference type="Rhea" id="RHEA-COMP:9561"/>
        <dbReference type="Rhea" id="RHEA-COMP:9562"/>
        <dbReference type="ChEBI" id="CHEBI:15378"/>
        <dbReference type="ChEBI" id="CHEBI:17757"/>
        <dbReference type="ChEBI" id="CHEBI:57783"/>
        <dbReference type="ChEBI" id="CHEBI:58349"/>
        <dbReference type="ChEBI" id="CHEBI:62192"/>
    </reaction>
</comment>
<comment type="cofactor">
    <cofactor evidence="1">
        <name>[4Fe-4S] cluster</name>
        <dbReference type="ChEBI" id="CHEBI:49883"/>
    </cofactor>
    <text evidence="1">Binds 2 [4Fe-4S] clusters per subunit.</text>
</comment>
<comment type="subunit">
    <text evidence="1">NDH is composed of at least 16 different subunits, 5 of which are encoded in the nucleus.</text>
</comment>
<comment type="subcellular location">
    <subcellularLocation>
        <location evidence="1">Plastid</location>
        <location evidence="1">Chloroplast thylakoid membrane</location>
        <topology evidence="1">Peripheral membrane protein</topology>
    </subcellularLocation>
</comment>
<comment type="similarity">
    <text evidence="1">Belongs to the complex I 23 kDa subunit family.</text>
</comment>
<feature type="chain" id="PRO_0000250800" description="NAD(P)H-quinone oxidoreductase subunit I, chloroplastic">
    <location>
        <begin position="1"/>
        <end position="166"/>
    </location>
</feature>
<feature type="domain" description="4Fe-4S ferredoxin-type 1" evidence="1">
    <location>
        <begin position="55"/>
        <end position="84"/>
    </location>
</feature>
<feature type="domain" description="4Fe-4S ferredoxin-type 2" evidence="1">
    <location>
        <begin position="95"/>
        <end position="124"/>
    </location>
</feature>
<feature type="binding site" evidence="1">
    <location>
        <position position="64"/>
    </location>
    <ligand>
        <name>[4Fe-4S] cluster</name>
        <dbReference type="ChEBI" id="CHEBI:49883"/>
        <label>1</label>
    </ligand>
</feature>
<feature type="binding site" evidence="1">
    <location>
        <position position="67"/>
    </location>
    <ligand>
        <name>[4Fe-4S] cluster</name>
        <dbReference type="ChEBI" id="CHEBI:49883"/>
        <label>1</label>
    </ligand>
</feature>
<feature type="binding site" evidence="1">
    <location>
        <position position="70"/>
    </location>
    <ligand>
        <name>[4Fe-4S] cluster</name>
        <dbReference type="ChEBI" id="CHEBI:49883"/>
        <label>1</label>
    </ligand>
</feature>
<feature type="binding site" evidence="1">
    <location>
        <position position="74"/>
    </location>
    <ligand>
        <name>[4Fe-4S] cluster</name>
        <dbReference type="ChEBI" id="CHEBI:49883"/>
        <label>2</label>
    </ligand>
</feature>
<feature type="binding site" evidence="1">
    <location>
        <position position="104"/>
    </location>
    <ligand>
        <name>[4Fe-4S] cluster</name>
        <dbReference type="ChEBI" id="CHEBI:49883"/>
        <label>2</label>
    </ligand>
</feature>
<feature type="binding site" evidence="1">
    <location>
        <position position="107"/>
    </location>
    <ligand>
        <name>[4Fe-4S] cluster</name>
        <dbReference type="ChEBI" id="CHEBI:49883"/>
        <label>2</label>
    </ligand>
</feature>
<feature type="binding site" evidence="1">
    <location>
        <position position="110"/>
    </location>
    <ligand>
        <name>[4Fe-4S] cluster</name>
        <dbReference type="ChEBI" id="CHEBI:49883"/>
        <label>2</label>
    </ligand>
</feature>
<feature type="binding site" evidence="1">
    <location>
        <position position="114"/>
    </location>
    <ligand>
        <name>[4Fe-4S] cluster</name>
        <dbReference type="ChEBI" id="CHEBI:49883"/>
        <label>1</label>
    </ligand>
</feature>
<sequence length="166" mass="19451">MFPMVTEFMNYGQQTVRAARYIGQGFMITLSHANRLPVTIQYPYEKLITSERFRGRIHFEFDKCIACEVCVRVCPIDLPVVDWKLETDIRKKRLLNYSIDFGICIFCGNCVEYCPTNCLSMTEEYELSTYDRHELNYNQIALGRLPMSVIDDYTIRTILNLSEIKT</sequence>
<keyword id="KW-0004">4Fe-4S</keyword>
<keyword id="KW-0150">Chloroplast</keyword>
<keyword id="KW-0408">Iron</keyword>
<keyword id="KW-0411">Iron-sulfur</keyword>
<keyword id="KW-0472">Membrane</keyword>
<keyword id="KW-0479">Metal-binding</keyword>
<keyword id="KW-0520">NAD</keyword>
<keyword id="KW-0521">NADP</keyword>
<keyword id="KW-0934">Plastid</keyword>
<keyword id="KW-0618">Plastoquinone</keyword>
<keyword id="KW-0874">Quinone</keyword>
<keyword id="KW-0677">Repeat</keyword>
<keyword id="KW-0793">Thylakoid</keyword>
<keyword id="KW-1278">Translocase</keyword>
<dbReference type="EC" id="7.1.1.-" evidence="1"/>
<dbReference type="EMBL" id="AF383800">
    <property type="protein sequence ID" value="AAN61741.1"/>
    <property type="molecule type" value="Genomic_DNA"/>
</dbReference>
<dbReference type="SMR" id="Q8HVR3"/>
<dbReference type="GO" id="GO:0009535">
    <property type="term" value="C:chloroplast thylakoid membrane"/>
    <property type="evidence" value="ECO:0007669"/>
    <property type="project" value="UniProtKB-SubCell"/>
</dbReference>
<dbReference type="GO" id="GO:0051539">
    <property type="term" value="F:4 iron, 4 sulfur cluster binding"/>
    <property type="evidence" value="ECO:0007669"/>
    <property type="project" value="UniProtKB-KW"/>
</dbReference>
<dbReference type="GO" id="GO:0005506">
    <property type="term" value="F:iron ion binding"/>
    <property type="evidence" value="ECO:0007669"/>
    <property type="project" value="UniProtKB-UniRule"/>
</dbReference>
<dbReference type="GO" id="GO:0008137">
    <property type="term" value="F:NADH dehydrogenase (ubiquinone) activity"/>
    <property type="evidence" value="ECO:0007669"/>
    <property type="project" value="InterPro"/>
</dbReference>
<dbReference type="GO" id="GO:0048038">
    <property type="term" value="F:quinone binding"/>
    <property type="evidence" value="ECO:0007669"/>
    <property type="project" value="UniProtKB-KW"/>
</dbReference>
<dbReference type="GO" id="GO:0019684">
    <property type="term" value="P:photosynthesis, light reaction"/>
    <property type="evidence" value="ECO:0007669"/>
    <property type="project" value="UniProtKB-UniRule"/>
</dbReference>
<dbReference type="FunFam" id="3.30.70.3270:FF:000006">
    <property type="entry name" value="NAD(P)H-quinone oxidoreductase subunit I, chloroplastic"/>
    <property type="match status" value="1"/>
</dbReference>
<dbReference type="Gene3D" id="3.30.70.3270">
    <property type="match status" value="1"/>
</dbReference>
<dbReference type="HAMAP" id="MF_01351">
    <property type="entry name" value="NDH1_NuoI"/>
    <property type="match status" value="1"/>
</dbReference>
<dbReference type="InterPro" id="IPR017896">
    <property type="entry name" value="4Fe4S_Fe-S-bd"/>
</dbReference>
<dbReference type="InterPro" id="IPR017900">
    <property type="entry name" value="4Fe4S_Fe_S_CS"/>
</dbReference>
<dbReference type="InterPro" id="IPR010226">
    <property type="entry name" value="NADH_quinone_OxRdtase_chainI"/>
</dbReference>
<dbReference type="InterPro" id="IPR004497">
    <property type="entry name" value="NDHI"/>
</dbReference>
<dbReference type="NCBIfam" id="TIGR00403">
    <property type="entry name" value="ndhI"/>
    <property type="match status" value="1"/>
</dbReference>
<dbReference type="NCBIfam" id="TIGR01971">
    <property type="entry name" value="NuoI"/>
    <property type="match status" value="1"/>
</dbReference>
<dbReference type="NCBIfam" id="NF004537">
    <property type="entry name" value="PRK05888.1-3"/>
    <property type="match status" value="1"/>
</dbReference>
<dbReference type="PANTHER" id="PTHR47275">
    <property type="entry name" value="NAD(P)H-QUINONE OXIDOREDUCTASE SUBUNIT I, CHLOROPLASTIC"/>
    <property type="match status" value="1"/>
</dbReference>
<dbReference type="PANTHER" id="PTHR47275:SF1">
    <property type="entry name" value="NAD(P)H-QUINONE OXIDOREDUCTASE SUBUNIT I, CHLOROPLASTIC"/>
    <property type="match status" value="1"/>
</dbReference>
<dbReference type="Pfam" id="PF00037">
    <property type="entry name" value="Fer4"/>
    <property type="match status" value="2"/>
</dbReference>
<dbReference type="SUPFAM" id="SSF54862">
    <property type="entry name" value="4Fe-4S ferredoxins"/>
    <property type="match status" value="1"/>
</dbReference>
<dbReference type="PROSITE" id="PS00198">
    <property type="entry name" value="4FE4S_FER_1"/>
    <property type="match status" value="2"/>
</dbReference>
<dbReference type="PROSITE" id="PS51379">
    <property type="entry name" value="4FE4S_FER_2"/>
    <property type="match status" value="2"/>
</dbReference>
<accession>Q8HVR3</accession>
<gene>
    <name evidence="1" type="primary">ndhI</name>
</gene>
<geneLocation type="chloroplast"/>
<proteinExistence type="inferred from homology"/>
<reference key="1">
    <citation type="submission" date="2003-01" db="EMBL/GenBank/DDBJ databases">
        <title>Chloroplast DNA phylogeny of tribe Heliantheae (Asteraceae).</title>
        <authorList>
            <person name="Panero J.L."/>
            <person name="Baldwin B.G."/>
            <person name="Schilling E.E."/>
            <person name="Clevinger J.A."/>
        </authorList>
    </citation>
    <scope>NUCLEOTIDE SEQUENCE [GENOMIC DNA]</scope>
</reference>
<protein>
    <recommendedName>
        <fullName evidence="1">NAD(P)H-quinone oxidoreductase subunit I, chloroplastic</fullName>
        <ecNumber evidence="1">7.1.1.-</ecNumber>
    </recommendedName>
    <alternativeName>
        <fullName evidence="1">NAD(P)H dehydrogenase subunit I</fullName>
        <shortName evidence="1">NDH subunit I</shortName>
    </alternativeName>
    <alternativeName>
        <fullName evidence="1">NADH-plastoquinone oxidoreductase subunit I</fullName>
    </alternativeName>
</protein>
<organism>
    <name type="scientific">Hymenoxys lemmonii</name>
    <name type="common">Lemmon's rubberweed</name>
    <dbReference type="NCBI Taxonomy" id="128718"/>
    <lineage>
        <taxon>Eukaryota</taxon>
        <taxon>Viridiplantae</taxon>
        <taxon>Streptophyta</taxon>
        <taxon>Embryophyta</taxon>
        <taxon>Tracheophyta</taxon>
        <taxon>Spermatophyta</taxon>
        <taxon>Magnoliopsida</taxon>
        <taxon>eudicotyledons</taxon>
        <taxon>Gunneridae</taxon>
        <taxon>Pentapetalae</taxon>
        <taxon>asterids</taxon>
        <taxon>campanulids</taxon>
        <taxon>Asterales</taxon>
        <taxon>Asteraceae</taxon>
        <taxon>Asteroideae</taxon>
        <taxon>Heliantheae alliance</taxon>
        <taxon>Helenieae</taxon>
        <taxon>Tetraneurinae</taxon>
        <taxon>Hymenoxys</taxon>
    </lineage>
</organism>
<name>NDHI_HYMLE</name>